<feature type="chain" id="PRO_1000096550" description="Triosephosphate isomerase">
    <location>
        <begin position="1"/>
        <end position="254"/>
    </location>
</feature>
<feature type="active site" description="Electrophile" evidence="1">
    <location>
        <position position="99"/>
    </location>
</feature>
<feature type="active site" description="Proton acceptor" evidence="1">
    <location>
        <position position="169"/>
    </location>
</feature>
<feature type="binding site" evidence="1">
    <location>
        <begin position="12"/>
        <end position="14"/>
    </location>
    <ligand>
        <name>substrate</name>
    </ligand>
</feature>
<feature type="binding site" evidence="1">
    <location>
        <position position="175"/>
    </location>
    <ligand>
        <name>substrate</name>
    </ligand>
</feature>
<feature type="binding site" evidence="1">
    <location>
        <position position="214"/>
    </location>
    <ligand>
        <name>substrate</name>
    </ligand>
</feature>
<feature type="binding site" evidence="1">
    <location>
        <begin position="235"/>
        <end position="236"/>
    </location>
    <ligand>
        <name>substrate</name>
    </ligand>
</feature>
<organism>
    <name type="scientific">Xanthobacter autotrophicus (strain ATCC BAA-1158 / Py2)</name>
    <dbReference type="NCBI Taxonomy" id="78245"/>
    <lineage>
        <taxon>Bacteria</taxon>
        <taxon>Pseudomonadati</taxon>
        <taxon>Pseudomonadota</taxon>
        <taxon>Alphaproteobacteria</taxon>
        <taxon>Hyphomicrobiales</taxon>
        <taxon>Xanthobacteraceae</taxon>
        <taxon>Xanthobacter</taxon>
    </lineage>
</organism>
<name>TPIS_XANP2</name>
<reference key="1">
    <citation type="submission" date="2007-07" db="EMBL/GenBank/DDBJ databases">
        <title>Complete sequence of chromosome of Xanthobacter autotrophicus Py2.</title>
        <authorList>
            <consortium name="US DOE Joint Genome Institute"/>
            <person name="Copeland A."/>
            <person name="Lucas S."/>
            <person name="Lapidus A."/>
            <person name="Barry K."/>
            <person name="Glavina del Rio T."/>
            <person name="Hammon N."/>
            <person name="Israni S."/>
            <person name="Dalin E."/>
            <person name="Tice H."/>
            <person name="Pitluck S."/>
            <person name="Sims D."/>
            <person name="Brettin T."/>
            <person name="Bruce D."/>
            <person name="Detter J.C."/>
            <person name="Han C."/>
            <person name="Tapia R."/>
            <person name="Brainard J."/>
            <person name="Schmutz J."/>
            <person name="Larimer F."/>
            <person name="Land M."/>
            <person name="Hauser L."/>
            <person name="Kyrpides N."/>
            <person name="Kim E."/>
            <person name="Ensigns S.A."/>
            <person name="Richardson P."/>
        </authorList>
    </citation>
    <scope>NUCLEOTIDE SEQUENCE [LARGE SCALE GENOMIC DNA]</scope>
    <source>
        <strain>ATCC BAA-1158 / Py2</strain>
    </source>
</reference>
<evidence type="ECO:0000255" key="1">
    <source>
        <dbReference type="HAMAP-Rule" id="MF_00147"/>
    </source>
</evidence>
<gene>
    <name evidence="1" type="primary">tpiA</name>
    <name type="ordered locus">Xaut_4380</name>
</gene>
<dbReference type="EC" id="5.3.1.1" evidence="1"/>
<dbReference type="EMBL" id="CP000781">
    <property type="protein sequence ID" value="ABS69601.1"/>
    <property type="molecule type" value="Genomic_DNA"/>
</dbReference>
<dbReference type="SMR" id="A7INK7"/>
<dbReference type="STRING" id="78245.Xaut_4380"/>
<dbReference type="KEGG" id="xau:Xaut_4380"/>
<dbReference type="eggNOG" id="COG0149">
    <property type="taxonomic scope" value="Bacteria"/>
</dbReference>
<dbReference type="HOGENOM" id="CLU_024251_2_1_5"/>
<dbReference type="OrthoDB" id="9809429at2"/>
<dbReference type="PhylomeDB" id="A7INK7"/>
<dbReference type="UniPathway" id="UPA00109">
    <property type="reaction ID" value="UER00189"/>
</dbReference>
<dbReference type="UniPathway" id="UPA00138"/>
<dbReference type="Proteomes" id="UP000002417">
    <property type="component" value="Chromosome"/>
</dbReference>
<dbReference type="GO" id="GO:0005829">
    <property type="term" value="C:cytosol"/>
    <property type="evidence" value="ECO:0007669"/>
    <property type="project" value="TreeGrafter"/>
</dbReference>
<dbReference type="GO" id="GO:0004807">
    <property type="term" value="F:triose-phosphate isomerase activity"/>
    <property type="evidence" value="ECO:0007669"/>
    <property type="project" value="UniProtKB-UniRule"/>
</dbReference>
<dbReference type="GO" id="GO:0006094">
    <property type="term" value="P:gluconeogenesis"/>
    <property type="evidence" value="ECO:0007669"/>
    <property type="project" value="UniProtKB-UniRule"/>
</dbReference>
<dbReference type="GO" id="GO:0046166">
    <property type="term" value="P:glyceraldehyde-3-phosphate biosynthetic process"/>
    <property type="evidence" value="ECO:0007669"/>
    <property type="project" value="TreeGrafter"/>
</dbReference>
<dbReference type="GO" id="GO:0019563">
    <property type="term" value="P:glycerol catabolic process"/>
    <property type="evidence" value="ECO:0007669"/>
    <property type="project" value="TreeGrafter"/>
</dbReference>
<dbReference type="GO" id="GO:0006096">
    <property type="term" value="P:glycolytic process"/>
    <property type="evidence" value="ECO:0007669"/>
    <property type="project" value="UniProtKB-UniRule"/>
</dbReference>
<dbReference type="CDD" id="cd00311">
    <property type="entry name" value="TIM"/>
    <property type="match status" value="1"/>
</dbReference>
<dbReference type="FunFam" id="3.20.20.70:FF:000016">
    <property type="entry name" value="Triosephosphate isomerase"/>
    <property type="match status" value="1"/>
</dbReference>
<dbReference type="Gene3D" id="3.20.20.70">
    <property type="entry name" value="Aldolase class I"/>
    <property type="match status" value="1"/>
</dbReference>
<dbReference type="HAMAP" id="MF_00147_B">
    <property type="entry name" value="TIM_B"/>
    <property type="match status" value="1"/>
</dbReference>
<dbReference type="InterPro" id="IPR013785">
    <property type="entry name" value="Aldolase_TIM"/>
</dbReference>
<dbReference type="InterPro" id="IPR035990">
    <property type="entry name" value="TIM_sf"/>
</dbReference>
<dbReference type="InterPro" id="IPR022896">
    <property type="entry name" value="TrioseP_Isoase_bac/euk"/>
</dbReference>
<dbReference type="InterPro" id="IPR000652">
    <property type="entry name" value="Triosephosphate_isomerase"/>
</dbReference>
<dbReference type="InterPro" id="IPR020861">
    <property type="entry name" value="Triosephosphate_isomerase_AS"/>
</dbReference>
<dbReference type="NCBIfam" id="TIGR00419">
    <property type="entry name" value="tim"/>
    <property type="match status" value="1"/>
</dbReference>
<dbReference type="PANTHER" id="PTHR21139">
    <property type="entry name" value="TRIOSEPHOSPHATE ISOMERASE"/>
    <property type="match status" value="1"/>
</dbReference>
<dbReference type="PANTHER" id="PTHR21139:SF42">
    <property type="entry name" value="TRIOSEPHOSPHATE ISOMERASE"/>
    <property type="match status" value="1"/>
</dbReference>
<dbReference type="Pfam" id="PF00121">
    <property type="entry name" value="TIM"/>
    <property type="match status" value="1"/>
</dbReference>
<dbReference type="SUPFAM" id="SSF51351">
    <property type="entry name" value="Triosephosphate isomerase (TIM)"/>
    <property type="match status" value="1"/>
</dbReference>
<dbReference type="PROSITE" id="PS00171">
    <property type="entry name" value="TIM_1"/>
    <property type="match status" value="1"/>
</dbReference>
<dbReference type="PROSITE" id="PS51440">
    <property type="entry name" value="TIM_2"/>
    <property type="match status" value="1"/>
</dbReference>
<sequence length="254" mass="26029">MPASRRVLIAGNWKMNGLKSSLAEIEALAAGYDGDLKAKLDLLVCPPATLLISAAERLAGSGVQLGGQNCHPAPAGAHTGGISAEMLKDAGVTSVIVGHSERRTNLSESDAVVMAKVKAAWCFGLLPIVCVGETAEERDAGEAVGVVTRQVHQSLPEGCTASNLVIAYEPVWAIGTGRTPTPEDVANIHGTIRSVLRSQFGAEADGIRILYGGSVKPDNAATLMAVADVDGALVGGASLKAADFLAIARATPAR</sequence>
<keyword id="KW-0963">Cytoplasm</keyword>
<keyword id="KW-0312">Gluconeogenesis</keyword>
<keyword id="KW-0324">Glycolysis</keyword>
<keyword id="KW-0413">Isomerase</keyword>
<keyword id="KW-1185">Reference proteome</keyword>
<protein>
    <recommendedName>
        <fullName evidence="1">Triosephosphate isomerase</fullName>
        <shortName evidence="1">TIM</shortName>
        <shortName evidence="1">TPI</shortName>
        <ecNumber evidence="1">5.3.1.1</ecNumber>
    </recommendedName>
    <alternativeName>
        <fullName evidence="1">Triose-phosphate isomerase</fullName>
    </alternativeName>
</protein>
<proteinExistence type="inferred from homology"/>
<accession>A7INK7</accession>
<comment type="function">
    <text evidence="1">Involved in the gluconeogenesis. Catalyzes stereospecifically the conversion of dihydroxyacetone phosphate (DHAP) to D-glyceraldehyde-3-phosphate (G3P).</text>
</comment>
<comment type="catalytic activity">
    <reaction evidence="1">
        <text>D-glyceraldehyde 3-phosphate = dihydroxyacetone phosphate</text>
        <dbReference type="Rhea" id="RHEA:18585"/>
        <dbReference type="ChEBI" id="CHEBI:57642"/>
        <dbReference type="ChEBI" id="CHEBI:59776"/>
        <dbReference type="EC" id="5.3.1.1"/>
    </reaction>
</comment>
<comment type="pathway">
    <text evidence="1">Carbohydrate biosynthesis; gluconeogenesis.</text>
</comment>
<comment type="pathway">
    <text evidence="1">Carbohydrate degradation; glycolysis; D-glyceraldehyde 3-phosphate from glycerone phosphate: step 1/1.</text>
</comment>
<comment type="subunit">
    <text evidence="1">Homodimer.</text>
</comment>
<comment type="subcellular location">
    <subcellularLocation>
        <location evidence="1">Cytoplasm</location>
    </subcellularLocation>
</comment>
<comment type="similarity">
    <text evidence="1">Belongs to the triosephosphate isomerase family.</text>
</comment>